<organism>
    <name type="scientific">Polynucleobacter necessarius subsp. necessarius (strain STIR1)</name>
    <dbReference type="NCBI Taxonomy" id="452638"/>
    <lineage>
        <taxon>Bacteria</taxon>
        <taxon>Pseudomonadati</taxon>
        <taxon>Pseudomonadota</taxon>
        <taxon>Betaproteobacteria</taxon>
        <taxon>Burkholderiales</taxon>
        <taxon>Burkholderiaceae</taxon>
        <taxon>Polynucleobacter</taxon>
    </lineage>
</organism>
<comment type="function">
    <text evidence="1">Catalyzes the formation of S-adenosylmethionine (AdoMet) from methionine and ATP. The overall synthetic reaction is composed of two sequential steps, AdoMet formation and the subsequent tripolyphosphate hydrolysis which occurs prior to release of AdoMet from the enzyme.</text>
</comment>
<comment type="catalytic activity">
    <reaction evidence="1">
        <text>L-methionine + ATP + H2O = S-adenosyl-L-methionine + phosphate + diphosphate</text>
        <dbReference type="Rhea" id="RHEA:21080"/>
        <dbReference type="ChEBI" id="CHEBI:15377"/>
        <dbReference type="ChEBI" id="CHEBI:30616"/>
        <dbReference type="ChEBI" id="CHEBI:33019"/>
        <dbReference type="ChEBI" id="CHEBI:43474"/>
        <dbReference type="ChEBI" id="CHEBI:57844"/>
        <dbReference type="ChEBI" id="CHEBI:59789"/>
        <dbReference type="EC" id="2.5.1.6"/>
    </reaction>
</comment>
<comment type="cofactor">
    <cofactor evidence="1">
        <name>Mg(2+)</name>
        <dbReference type="ChEBI" id="CHEBI:18420"/>
    </cofactor>
    <text evidence="1">Binds 2 divalent ions per subunit.</text>
</comment>
<comment type="cofactor">
    <cofactor evidence="1">
        <name>K(+)</name>
        <dbReference type="ChEBI" id="CHEBI:29103"/>
    </cofactor>
    <text evidence="1">Binds 1 potassium ion per subunit.</text>
</comment>
<comment type="pathway">
    <text evidence="1">Amino-acid biosynthesis; S-adenosyl-L-methionine biosynthesis; S-adenosyl-L-methionine from L-methionine: step 1/1.</text>
</comment>
<comment type="subunit">
    <text evidence="1">Homotetramer; dimer of dimers.</text>
</comment>
<comment type="subcellular location">
    <subcellularLocation>
        <location evidence="1">Cytoplasm</location>
    </subcellularLocation>
</comment>
<comment type="similarity">
    <text evidence="1">Belongs to the AdoMet synthase family.</text>
</comment>
<name>METK_POLNS</name>
<reference key="1">
    <citation type="journal article" date="2013" name="Proc. Natl. Acad. Sci. U.S.A.">
        <title>Polynucleobacter necessarius, a model for genome reduction in both free-living and symbiotic bacteria.</title>
        <authorList>
            <person name="Boscaro V."/>
            <person name="Felletti M."/>
            <person name="Vannini C."/>
            <person name="Ackerman M.S."/>
            <person name="Chain P.S."/>
            <person name="Malfatti S."/>
            <person name="Vergez L.M."/>
            <person name="Shin M."/>
            <person name="Doak T.G."/>
            <person name="Lynch M."/>
            <person name="Petroni G."/>
        </authorList>
    </citation>
    <scope>NUCLEOTIDE SEQUENCE [LARGE SCALE GENOMIC DNA]</scope>
    <source>
        <strain>STIR1</strain>
    </source>
</reference>
<protein>
    <recommendedName>
        <fullName evidence="1">S-adenosylmethionine synthase</fullName>
        <shortName evidence="1">AdoMet synthase</shortName>
        <ecNumber evidence="1">2.5.1.6</ecNumber>
    </recommendedName>
    <alternativeName>
        <fullName evidence="1">MAT</fullName>
    </alternativeName>
    <alternativeName>
        <fullName evidence="1">Methionine adenosyltransferase</fullName>
    </alternativeName>
</protein>
<feature type="chain" id="PRO_1000093070" description="S-adenosylmethionine synthase">
    <location>
        <begin position="1"/>
        <end position="388"/>
    </location>
</feature>
<feature type="region of interest" description="Flexible loop" evidence="1">
    <location>
        <begin position="100"/>
        <end position="110"/>
    </location>
</feature>
<feature type="binding site" description="in other chain" evidence="1">
    <location>
        <position position="16"/>
    </location>
    <ligand>
        <name>ATP</name>
        <dbReference type="ChEBI" id="CHEBI:30616"/>
        <note>ligand shared between two neighboring subunits</note>
    </ligand>
</feature>
<feature type="binding site" evidence="1">
    <location>
        <position position="18"/>
    </location>
    <ligand>
        <name>Mg(2+)</name>
        <dbReference type="ChEBI" id="CHEBI:18420"/>
    </ligand>
</feature>
<feature type="binding site" evidence="1">
    <location>
        <position position="44"/>
    </location>
    <ligand>
        <name>K(+)</name>
        <dbReference type="ChEBI" id="CHEBI:29103"/>
    </ligand>
</feature>
<feature type="binding site" description="in other chain" evidence="1">
    <location>
        <position position="57"/>
    </location>
    <ligand>
        <name>L-methionine</name>
        <dbReference type="ChEBI" id="CHEBI:57844"/>
        <note>ligand shared between two neighboring subunits</note>
    </ligand>
</feature>
<feature type="binding site" description="in other chain" evidence="1">
    <location>
        <position position="100"/>
    </location>
    <ligand>
        <name>L-methionine</name>
        <dbReference type="ChEBI" id="CHEBI:57844"/>
        <note>ligand shared between two neighboring subunits</note>
    </ligand>
</feature>
<feature type="binding site" description="in other chain" evidence="1">
    <location>
        <begin position="167"/>
        <end position="169"/>
    </location>
    <ligand>
        <name>ATP</name>
        <dbReference type="ChEBI" id="CHEBI:30616"/>
        <note>ligand shared between two neighboring subunits</note>
    </ligand>
</feature>
<feature type="binding site" description="in other chain" evidence="1">
    <location>
        <begin position="233"/>
        <end position="234"/>
    </location>
    <ligand>
        <name>ATP</name>
        <dbReference type="ChEBI" id="CHEBI:30616"/>
        <note>ligand shared between two neighboring subunits</note>
    </ligand>
</feature>
<feature type="binding site" evidence="1">
    <location>
        <position position="242"/>
    </location>
    <ligand>
        <name>ATP</name>
        <dbReference type="ChEBI" id="CHEBI:30616"/>
        <note>ligand shared between two neighboring subunits</note>
    </ligand>
</feature>
<feature type="binding site" evidence="1">
    <location>
        <position position="242"/>
    </location>
    <ligand>
        <name>L-methionine</name>
        <dbReference type="ChEBI" id="CHEBI:57844"/>
        <note>ligand shared between two neighboring subunits</note>
    </ligand>
</feature>
<feature type="binding site" description="in other chain" evidence="1">
    <location>
        <begin position="248"/>
        <end position="249"/>
    </location>
    <ligand>
        <name>ATP</name>
        <dbReference type="ChEBI" id="CHEBI:30616"/>
        <note>ligand shared between two neighboring subunits</note>
    </ligand>
</feature>
<feature type="binding site" evidence="1">
    <location>
        <position position="265"/>
    </location>
    <ligand>
        <name>ATP</name>
        <dbReference type="ChEBI" id="CHEBI:30616"/>
        <note>ligand shared between two neighboring subunits</note>
    </ligand>
</feature>
<feature type="binding site" evidence="1">
    <location>
        <position position="269"/>
    </location>
    <ligand>
        <name>ATP</name>
        <dbReference type="ChEBI" id="CHEBI:30616"/>
        <note>ligand shared between two neighboring subunits</note>
    </ligand>
</feature>
<feature type="binding site" description="in other chain" evidence="1">
    <location>
        <position position="273"/>
    </location>
    <ligand>
        <name>L-methionine</name>
        <dbReference type="ChEBI" id="CHEBI:57844"/>
        <note>ligand shared between two neighboring subunits</note>
    </ligand>
</feature>
<proteinExistence type="inferred from homology"/>
<keyword id="KW-0067">ATP-binding</keyword>
<keyword id="KW-0963">Cytoplasm</keyword>
<keyword id="KW-0460">Magnesium</keyword>
<keyword id="KW-0479">Metal-binding</keyword>
<keyword id="KW-0547">Nucleotide-binding</keyword>
<keyword id="KW-0554">One-carbon metabolism</keyword>
<keyword id="KW-0630">Potassium</keyword>
<keyword id="KW-0808">Transferase</keyword>
<sequence length="388" mass="41871">MANDYFFTSESVSEGHPDKVADQISDSILDAILAQDPTARVAAETLCNTGLVVLAGEITTNANVDYIQVARNTLREIGYDNTDYGIDYKGCAVLVAYDKQSPDIAQGVDKAHDDGLDQGAGDQGLMFGYACDETAELMPLPIHLSHRLVERQSQLRRDGRLNWLRPDAKSQVTLRYVDGKPDSIDTVVLSTQHDEDISLEKLREAVIEEIIKPVLPKHLIKGAINFLVNPTGRFVIGGPQGDCGLTGRKIIVDTYGGAAPHGGGAFSGKDPSKVDRSAAYAGRYVAKNVVAAGLASKCLIQISYAIGVAKPTSVMVSAFGTGKIVDEKIAQLVSEHFDLRPKGIVKMLNLLRPIYKKTAAYGHFGREEPEFSWEQTDKAAALRAAAGL</sequence>
<dbReference type="EC" id="2.5.1.6" evidence="1"/>
<dbReference type="EMBL" id="CP001010">
    <property type="protein sequence ID" value="ACB44778.1"/>
    <property type="molecule type" value="Genomic_DNA"/>
</dbReference>
<dbReference type="SMR" id="B1XSH9"/>
<dbReference type="STRING" id="452638.Pnec_1719"/>
<dbReference type="KEGG" id="pne:Pnec_1719"/>
<dbReference type="eggNOG" id="COG0192">
    <property type="taxonomic scope" value="Bacteria"/>
</dbReference>
<dbReference type="HOGENOM" id="CLU_041802_1_1_4"/>
<dbReference type="OrthoDB" id="9801686at2"/>
<dbReference type="UniPathway" id="UPA00315">
    <property type="reaction ID" value="UER00080"/>
</dbReference>
<dbReference type="GO" id="GO:0005737">
    <property type="term" value="C:cytoplasm"/>
    <property type="evidence" value="ECO:0007669"/>
    <property type="project" value="UniProtKB-SubCell"/>
</dbReference>
<dbReference type="GO" id="GO:0005524">
    <property type="term" value="F:ATP binding"/>
    <property type="evidence" value="ECO:0007669"/>
    <property type="project" value="UniProtKB-UniRule"/>
</dbReference>
<dbReference type="GO" id="GO:0000287">
    <property type="term" value="F:magnesium ion binding"/>
    <property type="evidence" value="ECO:0007669"/>
    <property type="project" value="UniProtKB-UniRule"/>
</dbReference>
<dbReference type="GO" id="GO:0004478">
    <property type="term" value="F:methionine adenosyltransferase activity"/>
    <property type="evidence" value="ECO:0007669"/>
    <property type="project" value="UniProtKB-UniRule"/>
</dbReference>
<dbReference type="GO" id="GO:0006730">
    <property type="term" value="P:one-carbon metabolic process"/>
    <property type="evidence" value="ECO:0007669"/>
    <property type="project" value="UniProtKB-KW"/>
</dbReference>
<dbReference type="GO" id="GO:0006556">
    <property type="term" value="P:S-adenosylmethionine biosynthetic process"/>
    <property type="evidence" value="ECO:0007669"/>
    <property type="project" value="UniProtKB-UniRule"/>
</dbReference>
<dbReference type="CDD" id="cd18079">
    <property type="entry name" value="S-AdoMet_synt"/>
    <property type="match status" value="1"/>
</dbReference>
<dbReference type="FunFam" id="3.30.300.10:FF:000003">
    <property type="entry name" value="S-adenosylmethionine synthase"/>
    <property type="match status" value="1"/>
</dbReference>
<dbReference type="FunFam" id="3.30.300.10:FF:000004">
    <property type="entry name" value="S-adenosylmethionine synthase"/>
    <property type="match status" value="1"/>
</dbReference>
<dbReference type="Gene3D" id="3.30.300.10">
    <property type="match status" value="3"/>
</dbReference>
<dbReference type="HAMAP" id="MF_00086">
    <property type="entry name" value="S_AdoMet_synth1"/>
    <property type="match status" value="1"/>
</dbReference>
<dbReference type="InterPro" id="IPR022631">
    <property type="entry name" value="ADOMET_SYNTHASE_CS"/>
</dbReference>
<dbReference type="InterPro" id="IPR022630">
    <property type="entry name" value="S-AdoMet_synt_C"/>
</dbReference>
<dbReference type="InterPro" id="IPR022629">
    <property type="entry name" value="S-AdoMet_synt_central"/>
</dbReference>
<dbReference type="InterPro" id="IPR022628">
    <property type="entry name" value="S-AdoMet_synt_N"/>
</dbReference>
<dbReference type="InterPro" id="IPR002133">
    <property type="entry name" value="S-AdoMet_synthetase"/>
</dbReference>
<dbReference type="InterPro" id="IPR022636">
    <property type="entry name" value="S-AdoMet_synthetase_sfam"/>
</dbReference>
<dbReference type="NCBIfam" id="TIGR01034">
    <property type="entry name" value="metK"/>
    <property type="match status" value="1"/>
</dbReference>
<dbReference type="PANTHER" id="PTHR11964">
    <property type="entry name" value="S-ADENOSYLMETHIONINE SYNTHETASE"/>
    <property type="match status" value="1"/>
</dbReference>
<dbReference type="Pfam" id="PF02773">
    <property type="entry name" value="S-AdoMet_synt_C"/>
    <property type="match status" value="1"/>
</dbReference>
<dbReference type="Pfam" id="PF02772">
    <property type="entry name" value="S-AdoMet_synt_M"/>
    <property type="match status" value="1"/>
</dbReference>
<dbReference type="Pfam" id="PF00438">
    <property type="entry name" value="S-AdoMet_synt_N"/>
    <property type="match status" value="1"/>
</dbReference>
<dbReference type="PIRSF" id="PIRSF000497">
    <property type="entry name" value="MAT"/>
    <property type="match status" value="1"/>
</dbReference>
<dbReference type="SUPFAM" id="SSF55973">
    <property type="entry name" value="S-adenosylmethionine synthetase"/>
    <property type="match status" value="3"/>
</dbReference>
<dbReference type="PROSITE" id="PS00376">
    <property type="entry name" value="ADOMET_SYNTHASE_1"/>
    <property type="match status" value="1"/>
</dbReference>
<dbReference type="PROSITE" id="PS00377">
    <property type="entry name" value="ADOMET_SYNTHASE_2"/>
    <property type="match status" value="1"/>
</dbReference>
<evidence type="ECO:0000255" key="1">
    <source>
        <dbReference type="HAMAP-Rule" id="MF_00086"/>
    </source>
</evidence>
<accession>B1XSH9</accession>
<gene>
    <name evidence="1" type="primary">metK</name>
    <name type="ordered locus">Pnec_1719</name>
</gene>